<accession>P0CG79</accession>
<accession>P08618</accession>
<accession>Q54HH5</accession>
<accession>Q54L38</accession>
<accession>Q54SE1</accession>
<accession>Q54SP3</accession>
<accession>Q54UW7</accession>
<accession>Q54WJ3</accession>
<accession>Q550W7</accession>
<accession>Q55DZ5</accession>
<accession>Q86KQ4</accession>
<proteinExistence type="evidence at protein level"/>
<keyword id="KW-0963">Cytoplasm</keyword>
<keyword id="KW-1017">Isopeptide bond</keyword>
<keyword id="KW-0539">Nucleus</keyword>
<keyword id="KW-1185">Reference proteome</keyword>
<keyword id="KW-0677">Repeat</keyword>
<keyword id="KW-0832">Ubl conjugation</keyword>
<reference key="1">
    <citation type="journal article" date="1989" name="Biochemistry">
        <title>Molecular organization of developmentally regulated Dictyostelium discoideum ubiquitin cDNAs.</title>
        <authorList>
            <person name="Ohmachi T."/>
            <person name="Giorda R."/>
            <person name="Shaw D.R."/>
            <person name="Ennis H.L."/>
        </authorList>
    </citation>
    <scope>NUCLEOTIDE SEQUENCE [MRNA]</scope>
</reference>
<reference key="2">
    <citation type="journal article" date="2005" name="Nature">
        <title>The genome of the social amoeba Dictyostelium discoideum.</title>
        <authorList>
            <person name="Eichinger L."/>
            <person name="Pachebat J.A."/>
            <person name="Gloeckner G."/>
            <person name="Rajandream M.A."/>
            <person name="Sucgang R."/>
            <person name="Berriman M."/>
            <person name="Song J."/>
            <person name="Olsen R."/>
            <person name="Szafranski K."/>
            <person name="Xu Q."/>
            <person name="Tunggal B."/>
            <person name="Kummerfeld S."/>
            <person name="Madera M."/>
            <person name="Konfortov B.A."/>
            <person name="Rivero F."/>
            <person name="Bankier A.T."/>
            <person name="Lehmann R."/>
            <person name="Hamlin N."/>
            <person name="Davies R."/>
            <person name="Gaudet P."/>
            <person name="Fey P."/>
            <person name="Pilcher K."/>
            <person name="Chen G."/>
            <person name="Saunders D."/>
            <person name="Sodergren E.J."/>
            <person name="Davis P."/>
            <person name="Kerhornou A."/>
            <person name="Nie X."/>
            <person name="Hall N."/>
            <person name="Anjard C."/>
            <person name="Hemphill L."/>
            <person name="Bason N."/>
            <person name="Farbrother P."/>
            <person name="Desany B."/>
            <person name="Just E."/>
            <person name="Morio T."/>
            <person name="Rost R."/>
            <person name="Churcher C.M."/>
            <person name="Cooper J."/>
            <person name="Haydock S."/>
            <person name="van Driessche N."/>
            <person name="Cronin A."/>
            <person name="Goodhead I."/>
            <person name="Muzny D.M."/>
            <person name="Mourier T."/>
            <person name="Pain A."/>
            <person name="Lu M."/>
            <person name="Harper D."/>
            <person name="Lindsay R."/>
            <person name="Hauser H."/>
            <person name="James K.D."/>
            <person name="Quiles M."/>
            <person name="Madan Babu M."/>
            <person name="Saito T."/>
            <person name="Buchrieser C."/>
            <person name="Wardroper A."/>
            <person name="Felder M."/>
            <person name="Thangavelu M."/>
            <person name="Johnson D."/>
            <person name="Knights A."/>
            <person name="Loulseged H."/>
            <person name="Mungall K.L."/>
            <person name="Oliver K."/>
            <person name="Price C."/>
            <person name="Quail M.A."/>
            <person name="Urushihara H."/>
            <person name="Hernandez J."/>
            <person name="Rabbinowitsch E."/>
            <person name="Steffen D."/>
            <person name="Sanders M."/>
            <person name="Ma J."/>
            <person name="Kohara Y."/>
            <person name="Sharp S."/>
            <person name="Simmonds M.N."/>
            <person name="Spiegler S."/>
            <person name="Tivey A."/>
            <person name="Sugano S."/>
            <person name="White B."/>
            <person name="Walker D."/>
            <person name="Woodward J.R."/>
            <person name="Winckler T."/>
            <person name="Tanaka Y."/>
            <person name="Shaulsky G."/>
            <person name="Schleicher M."/>
            <person name="Weinstock G.M."/>
            <person name="Rosenthal A."/>
            <person name="Cox E.C."/>
            <person name="Chisholm R.L."/>
            <person name="Gibbs R.A."/>
            <person name="Loomis W.F."/>
            <person name="Platzer M."/>
            <person name="Kay R.R."/>
            <person name="Williams J.G."/>
            <person name="Dear P.H."/>
            <person name="Noegel A.A."/>
            <person name="Barrell B.G."/>
            <person name="Kuspa A."/>
        </authorList>
    </citation>
    <scope>NUCLEOTIDE SEQUENCE [LARGE SCALE GENOMIC DNA]</scope>
    <source>
        <strain>AX4</strain>
    </source>
</reference>
<reference key="3">
    <citation type="journal article" date="2006" name="J. Proteome Res.">
        <title>Identification of novel centrosomal proteins in Dictyostelium discoideum by comparative proteomic approaches.</title>
        <authorList>
            <person name="Reinders Y."/>
            <person name="Schulz I."/>
            <person name="Graef R."/>
            <person name="Sickmann A."/>
        </authorList>
    </citation>
    <scope>IDENTIFICATION BY MASS SPECTROMETRY [LARGE SCALE ANALYSIS]</scope>
</reference>
<protein>
    <recommendedName>
        <fullName>Polyubiquitin-G</fullName>
    </recommendedName>
    <component>
        <recommendedName>
            <fullName>Ubiquitin</fullName>
        </recommendedName>
    </component>
</protein>
<dbReference type="EMBL" id="M23754">
    <property type="protein sequence ID" value="AAA33268.1"/>
    <property type="molecule type" value="mRNA"/>
</dbReference>
<dbReference type="EMBL" id="AAFI02000047">
    <property type="protein sequence ID" value="EAL66044.1"/>
    <property type="molecule type" value="Genomic_DNA"/>
</dbReference>
<dbReference type="RefSeq" id="XP_640098.1">
    <property type="nucleotide sequence ID" value="XM_635006.1"/>
</dbReference>
<dbReference type="SMR" id="P0CG79"/>
<dbReference type="FunCoup" id="P0CG79">
    <property type="interactions" value="303"/>
</dbReference>
<dbReference type="STRING" id="44689.P0CG79"/>
<dbReference type="PaxDb" id="44689-DDB0214920"/>
<dbReference type="EnsemblProtists" id="EAL66044">
    <property type="protein sequence ID" value="EAL66044"/>
    <property type="gene ID" value="DDB_G0282369"/>
</dbReference>
<dbReference type="GeneID" id="8623629"/>
<dbReference type="KEGG" id="ddi:DDB_G0282369"/>
<dbReference type="dictyBase" id="DDB_G0282369">
    <property type="gene designation" value="ubqG"/>
</dbReference>
<dbReference type="VEuPathDB" id="AmoebaDB:DDB_G0282369"/>
<dbReference type="eggNOG" id="KOG0001">
    <property type="taxonomic scope" value="Eukaryota"/>
</dbReference>
<dbReference type="HOGENOM" id="CLU_010412_7_0_1"/>
<dbReference type="InParanoid" id="P0CG79"/>
<dbReference type="OMA" id="NIQKESX"/>
<dbReference type="PhylomeDB" id="P0CG79"/>
<dbReference type="Reactome" id="R-DDI-110314">
    <property type="pathway name" value="Recognition of DNA damage by PCNA-containing replication complex"/>
</dbReference>
<dbReference type="Reactome" id="R-DDI-1169408">
    <property type="pathway name" value="ISG15 antiviral mechanism"/>
</dbReference>
<dbReference type="Reactome" id="R-DDI-1358803">
    <property type="pathway name" value="Downregulation of ERBB2:ERBB3 signaling"/>
</dbReference>
<dbReference type="Reactome" id="R-DDI-174048">
    <property type="pathway name" value="APC/C:Cdc20 mediated degradation of Cyclin B"/>
</dbReference>
<dbReference type="Reactome" id="R-DDI-174084">
    <property type="pathway name" value="Autodegradation of Cdh1 by Cdh1:APC/C"/>
</dbReference>
<dbReference type="Reactome" id="R-DDI-174154">
    <property type="pathway name" value="APC/C:Cdc20 mediated degradation of Securin"/>
</dbReference>
<dbReference type="Reactome" id="R-DDI-174178">
    <property type="pathway name" value="APC/C:Cdh1 mediated degradation of Cdc20 and other APC/C:Cdh1 targeted proteins in late mitosis/early G1"/>
</dbReference>
<dbReference type="Reactome" id="R-DDI-174184">
    <property type="pathway name" value="Cdc20:Phospho-APC/C mediated degradation of Cyclin A"/>
</dbReference>
<dbReference type="Reactome" id="R-DDI-179409">
    <property type="pathway name" value="APC-Cdc20 mediated degradation of Nek2A"/>
</dbReference>
<dbReference type="Reactome" id="R-DDI-2467813">
    <property type="pathway name" value="Separation of Sister Chromatids"/>
</dbReference>
<dbReference type="Reactome" id="R-DDI-2559582">
    <property type="pathway name" value="Senescence-Associated Secretory Phenotype (SASP)"/>
</dbReference>
<dbReference type="Reactome" id="R-DDI-349425">
    <property type="pathway name" value="Autodegradation of the E3 ubiquitin ligase COP1"/>
</dbReference>
<dbReference type="Reactome" id="R-DDI-382556">
    <property type="pathway name" value="ABC-family proteins mediated transport"/>
</dbReference>
<dbReference type="Reactome" id="R-DDI-450408">
    <property type="pathway name" value="AUF1 (hnRNP D0) binds and destabilizes mRNA"/>
</dbReference>
<dbReference type="Reactome" id="R-DDI-4641258">
    <property type="pathway name" value="Degradation of DVL"/>
</dbReference>
<dbReference type="Reactome" id="R-DDI-532668">
    <property type="pathway name" value="N-glycan trimming in the ER and Calnexin/Calreticulin cycle"/>
</dbReference>
<dbReference type="Reactome" id="R-DDI-5358346">
    <property type="pathway name" value="Hedgehog ligand biogenesis"/>
</dbReference>
<dbReference type="Reactome" id="R-DDI-5632684">
    <property type="pathway name" value="Hedgehog 'on' state"/>
</dbReference>
<dbReference type="Reactome" id="R-DDI-5655862">
    <property type="pathway name" value="Translesion synthesis by POLK"/>
</dbReference>
<dbReference type="Reactome" id="R-DDI-5658442">
    <property type="pathway name" value="Regulation of RAS by GAPs"/>
</dbReference>
<dbReference type="Reactome" id="R-DDI-5675482">
    <property type="pathway name" value="Regulation of necroptotic cell death"/>
</dbReference>
<dbReference type="Reactome" id="R-DDI-5687128">
    <property type="pathway name" value="MAPK6/MAPK4 signaling"/>
</dbReference>
<dbReference type="Reactome" id="R-DDI-5689603">
    <property type="pathway name" value="UCH proteinases"/>
</dbReference>
<dbReference type="Reactome" id="R-DDI-5689877">
    <property type="pathway name" value="Josephin domain DUBs"/>
</dbReference>
<dbReference type="Reactome" id="R-DDI-5689880">
    <property type="pathway name" value="Ub-specific processing proteases"/>
</dbReference>
<dbReference type="Reactome" id="R-DDI-5689901">
    <property type="pathway name" value="Metalloprotease DUBs"/>
</dbReference>
<dbReference type="Reactome" id="R-DDI-5696394">
    <property type="pathway name" value="DNA Damage Recognition in GG-NER"/>
</dbReference>
<dbReference type="Reactome" id="R-DDI-5696395">
    <property type="pathway name" value="Formation of Incision Complex in GG-NER"/>
</dbReference>
<dbReference type="Reactome" id="R-DDI-5696397">
    <property type="pathway name" value="Gap-filling DNA repair synthesis and ligation in GG-NER"/>
</dbReference>
<dbReference type="Reactome" id="R-DDI-6781823">
    <property type="pathway name" value="Formation of TC-NER Pre-Incision Complex"/>
</dbReference>
<dbReference type="Reactome" id="R-DDI-6782135">
    <property type="pathway name" value="Dual incision in TC-NER"/>
</dbReference>
<dbReference type="Reactome" id="R-DDI-6782210">
    <property type="pathway name" value="Gap-filling DNA repair synthesis and ligation in TC-NER"/>
</dbReference>
<dbReference type="Reactome" id="R-DDI-68949">
    <property type="pathway name" value="Orc1 removal from chromatin"/>
</dbReference>
<dbReference type="Reactome" id="R-DDI-69017">
    <property type="pathway name" value="CDK-mediated phosphorylation and removal of Cdc6"/>
</dbReference>
<dbReference type="Reactome" id="R-DDI-69231">
    <property type="pathway name" value="Cyclin D associated events in G1"/>
</dbReference>
<dbReference type="Reactome" id="R-DDI-69601">
    <property type="pathway name" value="Ubiquitin Mediated Degradation of Phosphorylated Cdc25A"/>
</dbReference>
<dbReference type="Reactome" id="R-DDI-8854050">
    <property type="pathway name" value="FBXL7 down-regulates AURKA during mitotic entry and in early mitosis"/>
</dbReference>
<dbReference type="Reactome" id="R-DDI-8866652">
    <property type="pathway name" value="Synthesis of active ubiquitin: roles of E1 and E2 enzymes"/>
</dbReference>
<dbReference type="Reactome" id="R-DDI-8866654">
    <property type="pathway name" value="E3 ubiquitin ligases ubiquitinate target proteins"/>
</dbReference>
<dbReference type="Reactome" id="R-DDI-8948747">
    <property type="pathway name" value="Regulation of PTEN localization"/>
</dbReference>
<dbReference type="Reactome" id="R-DDI-8948751">
    <property type="pathway name" value="Regulation of PTEN stability and activity"/>
</dbReference>
<dbReference type="Reactome" id="R-DDI-8951664">
    <property type="pathway name" value="Neddylation"/>
</dbReference>
<dbReference type="Reactome" id="R-DDI-901032">
    <property type="pathway name" value="ER Quality Control Compartment (ERQC)"/>
</dbReference>
<dbReference type="Reactome" id="R-DDI-9020702">
    <property type="pathway name" value="Interleukin-1 signaling"/>
</dbReference>
<dbReference type="Reactome" id="R-DDI-9033241">
    <property type="pathway name" value="Peroxisomal protein import"/>
</dbReference>
<dbReference type="Reactome" id="R-DDI-917729">
    <property type="pathway name" value="Endosomal Sorting Complex Required For Transport (ESCRT)"/>
</dbReference>
<dbReference type="Reactome" id="R-DDI-917937">
    <property type="pathway name" value="Iron uptake and transport"/>
</dbReference>
<dbReference type="Reactome" id="R-DDI-936440">
    <property type="pathway name" value="Negative regulators of DDX58/IFIH1 signaling"/>
</dbReference>
<dbReference type="Reactome" id="R-DDI-9646399">
    <property type="pathway name" value="Aggrephagy"/>
</dbReference>
<dbReference type="Reactome" id="R-DDI-9664873">
    <property type="pathway name" value="Pexophagy"/>
</dbReference>
<dbReference type="Reactome" id="R-DDI-9755511">
    <property type="pathway name" value="KEAP1-NFE2L2 pathway"/>
</dbReference>
<dbReference type="Reactome" id="R-DDI-9758274">
    <property type="pathway name" value="Regulation of NF-kappa B signaling"/>
</dbReference>
<dbReference type="Reactome" id="R-DDI-983168">
    <property type="pathway name" value="Antigen processing: Ubiquitination &amp; Proteasome degradation"/>
</dbReference>
<dbReference type="Reactome" id="R-DDI-9861718">
    <property type="pathway name" value="Regulation of pyruvate metabolism"/>
</dbReference>
<dbReference type="Reactome" id="R-DDI-9909505">
    <property type="pathway name" value="Modulation of host responses by IFN-stimulated genes"/>
</dbReference>
<dbReference type="PRO" id="PR:P0CG79"/>
<dbReference type="Proteomes" id="UP000002195">
    <property type="component" value="Chromosome 3"/>
</dbReference>
<dbReference type="GO" id="GO:0005737">
    <property type="term" value="C:cytoplasm"/>
    <property type="evidence" value="ECO:0000318"/>
    <property type="project" value="GO_Central"/>
</dbReference>
<dbReference type="GO" id="GO:0005634">
    <property type="term" value="C:nucleus"/>
    <property type="evidence" value="ECO:0000318"/>
    <property type="project" value="GO_Central"/>
</dbReference>
<dbReference type="GO" id="GO:0031386">
    <property type="term" value="F:protein tag activity"/>
    <property type="evidence" value="ECO:0000318"/>
    <property type="project" value="GO_Central"/>
</dbReference>
<dbReference type="GO" id="GO:0031625">
    <property type="term" value="F:ubiquitin protein ligase binding"/>
    <property type="evidence" value="ECO:0000318"/>
    <property type="project" value="GO_Central"/>
</dbReference>
<dbReference type="GO" id="GO:0019941">
    <property type="term" value="P:modification-dependent protein catabolic process"/>
    <property type="evidence" value="ECO:0000318"/>
    <property type="project" value="GO_Central"/>
</dbReference>
<dbReference type="GO" id="GO:0016567">
    <property type="term" value="P:protein ubiquitination"/>
    <property type="evidence" value="ECO:0000318"/>
    <property type="project" value="GO_Central"/>
</dbReference>
<dbReference type="CDD" id="cd01803">
    <property type="entry name" value="Ubl_ubiquitin"/>
    <property type="match status" value="5"/>
</dbReference>
<dbReference type="FunFam" id="3.10.20.90:FF:000158">
    <property type="entry name" value="Polyubiquitin 5"/>
    <property type="match status" value="3"/>
</dbReference>
<dbReference type="FunFam" id="3.10.20.90:FF:000014">
    <property type="entry name" value="Ubiquitin-60S ribosomal L40 fusion"/>
    <property type="match status" value="2"/>
</dbReference>
<dbReference type="Gene3D" id="3.10.20.90">
    <property type="entry name" value="Phosphatidylinositol 3-kinase Catalytic Subunit, Chain A, domain 1"/>
    <property type="match status" value="5"/>
</dbReference>
<dbReference type="InterPro" id="IPR000626">
    <property type="entry name" value="Ubiquitin-like_dom"/>
</dbReference>
<dbReference type="InterPro" id="IPR029071">
    <property type="entry name" value="Ubiquitin-like_domsf"/>
</dbReference>
<dbReference type="InterPro" id="IPR019954">
    <property type="entry name" value="Ubiquitin_CS"/>
</dbReference>
<dbReference type="InterPro" id="IPR019956">
    <property type="entry name" value="Ubiquitin_dom"/>
</dbReference>
<dbReference type="InterPro" id="IPR050158">
    <property type="entry name" value="Ubiquitin_ubiquitin-like"/>
</dbReference>
<dbReference type="PANTHER" id="PTHR10666">
    <property type="entry name" value="UBIQUITIN"/>
    <property type="match status" value="1"/>
</dbReference>
<dbReference type="Pfam" id="PF00240">
    <property type="entry name" value="ubiquitin"/>
    <property type="match status" value="5"/>
</dbReference>
<dbReference type="PRINTS" id="PR00348">
    <property type="entry name" value="UBIQUITIN"/>
</dbReference>
<dbReference type="SMART" id="SM00213">
    <property type="entry name" value="UBQ"/>
    <property type="match status" value="5"/>
</dbReference>
<dbReference type="SUPFAM" id="SSF54236">
    <property type="entry name" value="Ubiquitin-like"/>
    <property type="match status" value="5"/>
</dbReference>
<dbReference type="PROSITE" id="PS00299">
    <property type="entry name" value="UBIQUITIN_1"/>
    <property type="match status" value="5"/>
</dbReference>
<dbReference type="PROSITE" id="PS50053">
    <property type="entry name" value="UBIQUITIN_2"/>
    <property type="match status" value="5"/>
</dbReference>
<organism>
    <name type="scientific">Dictyostelium discoideum</name>
    <name type="common">Social amoeba</name>
    <dbReference type="NCBI Taxonomy" id="44689"/>
    <lineage>
        <taxon>Eukaryota</taxon>
        <taxon>Amoebozoa</taxon>
        <taxon>Evosea</taxon>
        <taxon>Eumycetozoa</taxon>
        <taxon>Dictyostelia</taxon>
        <taxon>Dictyosteliales</taxon>
        <taxon>Dictyosteliaceae</taxon>
        <taxon>Dictyostelium</taxon>
    </lineage>
</organism>
<feature type="chain" id="PRO_0000396329" description="Ubiquitin">
    <location>
        <begin position="1"/>
        <end position="76"/>
    </location>
</feature>
<feature type="chain" id="PRO_0000396330" description="Ubiquitin">
    <location>
        <begin position="77"/>
        <end position="152"/>
    </location>
</feature>
<feature type="chain" id="PRO_0000396331" description="Ubiquitin">
    <location>
        <begin position="153"/>
        <end position="228"/>
    </location>
</feature>
<feature type="chain" id="PRO_0000396332" description="Ubiquitin">
    <location>
        <begin position="229"/>
        <end position="304"/>
    </location>
</feature>
<feature type="chain" id="PRO_0000396333" description="Ubiquitin">
    <location>
        <begin position="305"/>
        <end position="380"/>
    </location>
</feature>
<feature type="propeptide" id="PRO_0000396334">
    <location>
        <position position="381"/>
    </location>
</feature>
<feature type="domain" description="Ubiquitin-like 1" evidence="2">
    <location>
        <begin position="1"/>
        <end position="76"/>
    </location>
</feature>
<feature type="domain" description="Ubiquitin-like 2" evidence="2">
    <location>
        <begin position="77"/>
        <end position="152"/>
    </location>
</feature>
<feature type="domain" description="Ubiquitin-like 3" evidence="2">
    <location>
        <begin position="153"/>
        <end position="228"/>
    </location>
</feature>
<feature type="domain" description="Ubiquitin-like 4" evidence="2">
    <location>
        <begin position="229"/>
        <end position="304"/>
    </location>
</feature>
<feature type="domain" description="Ubiquitin-like 5" evidence="2">
    <location>
        <begin position="305"/>
        <end position="380"/>
    </location>
</feature>
<feature type="cross-link" description="Glycyl lysine isopeptide (Lys-Gly) (interchain with G-Cter in ubiquitin)" evidence="1">
    <location>
        <position position="48"/>
    </location>
</feature>
<feature type="cross-link" description="Glycyl lysine isopeptide (Gly-Lys) (interchain with K-? in acceptor proteins)" evidence="2">
    <location>
        <position position="76"/>
    </location>
</feature>
<comment type="function">
    <text evidence="1">Ubiquitin exists either covalently attached to another protein, or free (unanchored). When covalently bound, it is conjugated to target proteins via an isopeptide bond either as a monomer (monoubiquitin), a polymer linked via different Lys residues of the ubiquitin (polyubiquitin chains) or a linear polymer linked via the initiator Met of the ubiquitin (linear polyubiquitin chains). Polyubiquitin chains, when attached to a target protein, have different functions depending on the Lys residue of the ubiquitin that is linked: Lys-48-linked is involved in protein degradation via the proteasome. Linear polymer chains formed via attachment by the initiator Met lead to cell signaling. Ubiquitin is usually conjugated to Lys residues of target proteins, however, in rare cases, conjugation to Cys or Ser residues has been observed. When polyubiquitin is free (unanchored-polyubiquitin), it also has distinct roles, such as in activation of protein kinases, and in signaling (By similarity).</text>
</comment>
<comment type="subcellular location">
    <subcellularLocation>
        <location evidence="1">Cytoplasm</location>
    </subcellularLocation>
    <subcellularLocation>
        <location evidence="1">Nucleus</location>
    </subcellularLocation>
</comment>
<comment type="miscellaneous">
    <text>Ubiquitin is synthesized as a polyubiquitin precursor with exact head to tail repeats. Some ubiquitin genes contain a single copy of ubiquitin fused to a ribosomal protein. In D.discoideum there are 9 genes: ubqA: 5 copies of Ub and a final Asn; ubqB: 1 copy of Ub and ribosomal protein eL40; ubqC: 1 copy of Ub and ribosomal protein eS31; ubqD: 3 copies of Ub and a final Leu; ubqF: 7 copies of Ub and a final Asn; ubqG: 5 copies of Ub and a final Leu; ubqH: 5 copies of Ub and a final Asn; ubqI: 4 copies of Ub and a final Asn; ubqJ: 4 copies of Ub and a final Asn.</text>
</comment>
<comment type="miscellaneous">
    <text>For the sake of clarity sequence features are annotated only for the first chain, and are not repeated for each of the following chains.</text>
</comment>
<comment type="similarity">
    <text evidence="3">Belongs to the ubiquitin family.</text>
</comment>
<name>UBIQG_DICDI</name>
<sequence>MQIFVKTLTGKTITLEVEGSDNIENVKAKIQDKEGIPPDQQRLIFAGKQLEDGRTLSDYNIQKESTLHLVLRLRGGMQIFVKTLTGKTITLEVEGSDNIENVKAKIQDKEGIPPDQQRLIFAGKQLEDGRTLSDYNIQKESTLHLVLRLRGGMQIFVKTLTGKTITLEVEGSDNIENVKAKIQDKEGIPPDQQRLIFAGKQLEDGRTLSDYNIQKESTLHLVLRLRGGMQIFVKTLTGKTITLEVEGSDNIENVKAKIQDKEGIPPDQQRLIFAGKQLEDGRTLSDYNIQKESTLHLVLRLRGGMQIFVKTLTGKTITLEVEGSDNIENVKAKIQDKEGIPPDQQRLIFAGKQLEDGRTLSDYNIQKESTLHLVLRLRGGL</sequence>
<gene>
    <name type="primary">ubqG</name>
    <name type="synonym">veg116</name>
    <name type="ORF">DDB_G0282369</name>
</gene>
<evidence type="ECO:0000250" key="1"/>
<evidence type="ECO:0000255" key="2">
    <source>
        <dbReference type="PROSITE-ProRule" id="PRU00214"/>
    </source>
</evidence>
<evidence type="ECO:0000305" key="3"/>